<keyword id="KW-0067">ATP-binding</keyword>
<keyword id="KW-0143">Chaperone</keyword>
<keyword id="KW-0963">Cytoplasm</keyword>
<keyword id="KW-0413">Isomerase</keyword>
<keyword id="KW-0547">Nucleotide-binding</keyword>
<keyword id="KW-1185">Reference proteome</keyword>
<sequence>MAAKEVKFASDARDRMLRGVDTLANAVKVTLGPKGRNVVIEKSFGAPRITKDGVTVAKEIELKDKFENMGAQMLREVASKQNDKAGDGTTTATVLAQAIVREGAKAVAAGMNPIDLKRGIDLAVGTVVKDLESHAKKVSANSEIAQVATISANGDETVGRFLAEAMDKVGNEGVITVEEAKSLETELETVEGMQFDRGYLSPYFVTNTEKLKVELEDPYILIHEKKLSNLQALIPLLEQVVQSGKPLLIIAEDVEGEALATLVVNKLRGGLKVAAVKAPGFGDRRKAMLEDVAILTAGNVVSEELGTKLENVTIGMLGRAKKVIIDKDNTTIVDGAGNKADIDARVSQIRAQIETTTSDYDREKLQERVAKLAGGVAVIRVGGATEVEVKERKDRVDDALHATRAAVEEGILPGGGIALLRALKSLDGLKAANDDQQSGIDIVRRALRAPARQIAENAGEDGAYIVGKLLEGDDYNHGFNAATGEYEDLVKSGVIDPAKVVRTALQDAASVASLLITTEALVAELPKEDTPAPMPAMDF</sequence>
<accession>Q2NBL8</accession>
<protein>
    <recommendedName>
        <fullName evidence="1">Chaperonin GroEL 1</fullName>
        <ecNumber evidence="1">5.6.1.7</ecNumber>
    </recommendedName>
    <alternativeName>
        <fullName evidence="1">60 kDa chaperonin 1</fullName>
    </alternativeName>
    <alternativeName>
        <fullName evidence="1">Chaperonin-60 1</fullName>
        <shortName evidence="1">Cpn60 1</shortName>
    </alternativeName>
</protein>
<feature type="chain" id="PRO_0000331997" description="Chaperonin GroEL 1">
    <location>
        <begin position="1"/>
        <end position="539"/>
    </location>
</feature>
<feature type="binding site" evidence="1">
    <location>
        <begin position="30"/>
        <end position="33"/>
    </location>
    <ligand>
        <name>ATP</name>
        <dbReference type="ChEBI" id="CHEBI:30616"/>
    </ligand>
</feature>
<feature type="binding site" evidence="1">
    <location>
        <position position="51"/>
    </location>
    <ligand>
        <name>ATP</name>
        <dbReference type="ChEBI" id="CHEBI:30616"/>
    </ligand>
</feature>
<feature type="binding site" evidence="1">
    <location>
        <begin position="87"/>
        <end position="91"/>
    </location>
    <ligand>
        <name>ATP</name>
        <dbReference type="ChEBI" id="CHEBI:30616"/>
    </ligand>
</feature>
<feature type="binding site" evidence="1">
    <location>
        <position position="415"/>
    </location>
    <ligand>
        <name>ATP</name>
        <dbReference type="ChEBI" id="CHEBI:30616"/>
    </ligand>
</feature>
<feature type="binding site" evidence="1">
    <location>
        <begin position="480"/>
        <end position="482"/>
    </location>
    <ligand>
        <name>ATP</name>
        <dbReference type="ChEBI" id="CHEBI:30616"/>
    </ligand>
</feature>
<feature type="binding site" evidence="1">
    <location>
        <position position="496"/>
    </location>
    <ligand>
        <name>ATP</name>
        <dbReference type="ChEBI" id="CHEBI:30616"/>
    </ligand>
</feature>
<organism>
    <name type="scientific">Erythrobacter litoralis (strain HTCC2594)</name>
    <dbReference type="NCBI Taxonomy" id="314225"/>
    <lineage>
        <taxon>Bacteria</taxon>
        <taxon>Pseudomonadati</taxon>
        <taxon>Pseudomonadota</taxon>
        <taxon>Alphaproteobacteria</taxon>
        <taxon>Sphingomonadales</taxon>
        <taxon>Erythrobacteraceae</taxon>
        <taxon>Erythrobacter/Porphyrobacter group</taxon>
        <taxon>Erythrobacter</taxon>
    </lineage>
</organism>
<dbReference type="EC" id="5.6.1.7" evidence="1"/>
<dbReference type="EMBL" id="CP000157">
    <property type="protein sequence ID" value="ABC62923.1"/>
    <property type="molecule type" value="Genomic_DNA"/>
</dbReference>
<dbReference type="RefSeq" id="WP_011413797.1">
    <property type="nucleotide sequence ID" value="NC_007722.1"/>
</dbReference>
<dbReference type="SMR" id="Q2NBL8"/>
<dbReference type="STRING" id="314225.ELI_04155"/>
<dbReference type="KEGG" id="eli:ELI_04155"/>
<dbReference type="eggNOG" id="COG0459">
    <property type="taxonomic scope" value="Bacteria"/>
</dbReference>
<dbReference type="HOGENOM" id="CLU_016503_3_0_5"/>
<dbReference type="OrthoDB" id="9766614at2"/>
<dbReference type="Proteomes" id="UP000008808">
    <property type="component" value="Chromosome"/>
</dbReference>
<dbReference type="GO" id="GO:0005737">
    <property type="term" value="C:cytoplasm"/>
    <property type="evidence" value="ECO:0007669"/>
    <property type="project" value="UniProtKB-SubCell"/>
</dbReference>
<dbReference type="GO" id="GO:0005524">
    <property type="term" value="F:ATP binding"/>
    <property type="evidence" value="ECO:0007669"/>
    <property type="project" value="UniProtKB-UniRule"/>
</dbReference>
<dbReference type="GO" id="GO:0140662">
    <property type="term" value="F:ATP-dependent protein folding chaperone"/>
    <property type="evidence" value="ECO:0007669"/>
    <property type="project" value="InterPro"/>
</dbReference>
<dbReference type="GO" id="GO:0016853">
    <property type="term" value="F:isomerase activity"/>
    <property type="evidence" value="ECO:0007669"/>
    <property type="project" value="UniProtKB-KW"/>
</dbReference>
<dbReference type="GO" id="GO:0051082">
    <property type="term" value="F:unfolded protein binding"/>
    <property type="evidence" value="ECO:0007669"/>
    <property type="project" value="UniProtKB-UniRule"/>
</dbReference>
<dbReference type="GO" id="GO:0042026">
    <property type="term" value="P:protein refolding"/>
    <property type="evidence" value="ECO:0007669"/>
    <property type="project" value="UniProtKB-UniRule"/>
</dbReference>
<dbReference type="CDD" id="cd03344">
    <property type="entry name" value="GroEL"/>
    <property type="match status" value="1"/>
</dbReference>
<dbReference type="FunFam" id="1.10.560.10:FF:000001">
    <property type="entry name" value="60 kDa chaperonin"/>
    <property type="match status" value="1"/>
</dbReference>
<dbReference type="FunFam" id="3.50.7.10:FF:000001">
    <property type="entry name" value="60 kDa chaperonin"/>
    <property type="match status" value="1"/>
</dbReference>
<dbReference type="Gene3D" id="3.50.7.10">
    <property type="entry name" value="GroEL"/>
    <property type="match status" value="1"/>
</dbReference>
<dbReference type="Gene3D" id="1.10.560.10">
    <property type="entry name" value="GroEL-like equatorial domain"/>
    <property type="match status" value="1"/>
</dbReference>
<dbReference type="Gene3D" id="3.30.260.10">
    <property type="entry name" value="TCP-1-like chaperonin intermediate domain"/>
    <property type="match status" value="1"/>
</dbReference>
<dbReference type="HAMAP" id="MF_00600">
    <property type="entry name" value="CH60"/>
    <property type="match status" value="1"/>
</dbReference>
<dbReference type="InterPro" id="IPR018370">
    <property type="entry name" value="Chaperonin_Cpn60_CS"/>
</dbReference>
<dbReference type="InterPro" id="IPR001844">
    <property type="entry name" value="Cpn60/GroEL"/>
</dbReference>
<dbReference type="InterPro" id="IPR002423">
    <property type="entry name" value="Cpn60/GroEL/TCP-1"/>
</dbReference>
<dbReference type="InterPro" id="IPR027409">
    <property type="entry name" value="GroEL-like_apical_dom_sf"/>
</dbReference>
<dbReference type="InterPro" id="IPR027413">
    <property type="entry name" value="GROEL-like_equatorial_sf"/>
</dbReference>
<dbReference type="InterPro" id="IPR027410">
    <property type="entry name" value="TCP-1-like_intermed_sf"/>
</dbReference>
<dbReference type="NCBIfam" id="TIGR02348">
    <property type="entry name" value="GroEL"/>
    <property type="match status" value="1"/>
</dbReference>
<dbReference type="NCBIfam" id="NF000592">
    <property type="entry name" value="PRK00013.1"/>
    <property type="match status" value="1"/>
</dbReference>
<dbReference type="NCBIfam" id="NF009487">
    <property type="entry name" value="PRK12849.1"/>
    <property type="match status" value="1"/>
</dbReference>
<dbReference type="NCBIfam" id="NF009488">
    <property type="entry name" value="PRK12850.1"/>
    <property type="match status" value="1"/>
</dbReference>
<dbReference type="NCBIfam" id="NF009489">
    <property type="entry name" value="PRK12851.1"/>
    <property type="match status" value="1"/>
</dbReference>
<dbReference type="PANTHER" id="PTHR45633">
    <property type="entry name" value="60 KDA HEAT SHOCK PROTEIN, MITOCHONDRIAL"/>
    <property type="match status" value="1"/>
</dbReference>
<dbReference type="Pfam" id="PF00118">
    <property type="entry name" value="Cpn60_TCP1"/>
    <property type="match status" value="1"/>
</dbReference>
<dbReference type="PRINTS" id="PR00298">
    <property type="entry name" value="CHAPERONIN60"/>
</dbReference>
<dbReference type="SUPFAM" id="SSF52029">
    <property type="entry name" value="GroEL apical domain-like"/>
    <property type="match status" value="1"/>
</dbReference>
<dbReference type="SUPFAM" id="SSF48592">
    <property type="entry name" value="GroEL equatorial domain-like"/>
    <property type="match status" value="1"/>
</dbReference>
<dbReference type="SUPFAM" id="SSF54849">
    <property type="entry name" value="GroEL-intermediate domain like"/>
    <property type="match status" value="1"/>
</dbReference>
<dbReference type="PROSITE" id="PS00296">
    <property type="entry name" value="CHAPERONINS_CPN60"/>
    <property type="match status" value="1"/>
</dbReference>
<evidence type="ECO:0000255" key="1">
    <source>
        <dbReference type="HAMAP-Rule" id="MF_00600"/>
    </source>
</evidence>
<proteinExistence type="inferred from homology"/>
<comment type="function">
    <text evidence="1">Together with its co-chaperonin GroES, plays an essential role in assisting protein folding. The GroEL-GroES system forms a nano-cage that allows encapsulation of the non-native substrate proteins and provides a physical environment optimized to promote and accelerate protein folding.</text>
</comment>
<comment type="catalytic activity">
    <reaction evidence="1">
        <text>ATP + H2O + a folded polypeptide = ADP + phosphate + an unfolded polypeptide.</text>
        <dbReference type="EC" id="5.6.1.7"/>
    </reaction>
</comment>
<comment type="subunit">
    <text evidence="1">Forms a cylinder of 14 subunits composed of two heptameric rings stacked back-to-back. Interacts with the co-chaperonin GroES.</text>
</comment>
<comment type="subcellular location">
    <subcellularLocation>
        <location evidence="1">Cytoplasm</location>
    </subcellularLocation>
</comment>
<comment type="similarity">
    <text evidence="1">Belongs to the chaperonin (HSP60) family.</text>
</comment>
<reference key="1">
    <citation type="journal article" date="2009" name="J. Bacteriol.">
        <title>Complete genome sequence of Erythrobacter litoralis HTCC2594.</title>
        <authorList>
            <person name="Oh H.M."/>
            <person name="Giovannoni S.J."/>
            <person name="Ferriera S."/>
            <person name="Johnson J."/>
            <person name="Cho J.C."/>
        </authorList>
    </citation>
    <scope>NUCLEOTIDE SEQUENCE [LARGE SCALE GENOMIC DNA]</scope>
    <source>
        <strain>HTCC2594</strain>
    </source>
</reference>
<name>CH601_ERYLH</name>
<gene>
    <name evidence="1" type="primary">groEL1</name>
    <name evidence="1" type="synonym">groL1</name>
    <name type="ordered locus">ELI_04155</name>
</gene>